<accession>P37651</accession>
<accession>Q2M7J3</accession>
<name>GUN_ECOLI</name>
<protein>
    <recommendedName>
        <fullName>Endoglucanase</fullName>
        <ecNumber>3.2.1.4</ecNumber>
    </recommendedName>
    <alternativeName>
        <fullName>Carboxymethylcellulase</fullName>
        <shortName>CMCase</shortName>
    </alternativeName>
    <alternativeName>
        <fullName>Cellulase</fullName>
    </alternativeName>
    <alternativeName>
        <fullName>Endo-1,4-beta-glucanase</fullName>
    </alternativeName>
</protein>
<comment type="function">
    <text>Hydrolyzes carboxymethylcellulose.</text>
</comment>
<comment type="catalytic activity">
    <reaction>
        <text>Endohydrolysis of (1-&gt;4)-beta-D-glucosidic linkages in cellulose, lichenin and cereal beta-D-glucans.</text>
        <dbReference type="EC" id="3.2.1.4"/>
    </reaction>
</comment>
<comment type="pathway">
    <text>Glycan metabolism; bacterial cellulose biosynthesis.</text>
</comment>
<comment type="subcellular location">
    <subcellularLocation>
        <location>Secreted</location>
    </subcellularLocation>
</comment>
<comment type="miscellaneous">
    <text>The genes bscA, bcsB, bcsZ and bcsC are constitutively transcribed but cellulose synthesis occurs only when DgcC, a putative transmembrane protein regulated by CsgD, is expressed. Cellulose production is abolished in E.coli K12.</text>
</comment>
<comment type="similarity">
    <text evidence="4">Belongs to the glycosyl hydrolase 8 (cellulase D) family.</text>
</comment>
<gene>
    <name type="primary">bcsZ</name>
    <name type="synonym">bcsC</name>
    <name type="synonym">yhjM</name>
    <name type="ordered locus">b3531</name>
    <name type="ordered locus">JW3499</name>
</gene>
<keyword id="KW-0002">3D-structure</keyword>
<keyword id="KW-0119">Carbohydrate metabolism</keyword>
<keyword id="KW-0136">Cellulose degradation</keyword>
<keyword id="KW-0326">Glycosidase</keyword>
<keyword id="KW-0378">Hydrolase</keyword>
<keyword id="KW-0624">Polysaccharide degradation</keyword>
<keyword id="KW-1185">Reference proteome</keyword>
<keyword id="KW-0964">Secreted</keyword>
<keyword id="KW-0732">Signal</keyword>
<feature type="signal peptide" evidence="2">
    <location>
        <begin position="1"/>
        <end position="21"/>
    </location>
</feature>
<feature type="chain" id="PRO_0000007938" description="Endoglucanase">
    <location>
        <begin position="22"/>
        <end position="368"/>
    </location>
</feature>
<feature type="active site" description="Proton donor" evidence="1">
    <location>
        <position position="55"/>
    </location>
</feature>
<feature type="active site" description="Nucleophile" evidence="3">
    <location>
        <position position="116"/>
    </location>
</feature>
<feature type="helix" evidence="5">
    <location>
        <begin position="26"/>
        <end position="35"/>
    </location>
</feature>
<feature type="strand" evidence="5">
    <location>
        <begin position="51"/>
        <end position="53"/>
    </location>
</feature>
<feature type="helix" evidence="5">
    <location>
        <begin position="54"/>
        <end position="66"/>
    </location>
</feature>
<feature type="helix" evidence="5">
    <location>
        <begin position="70"/>
        <end position="84"/>
    </location>
</feature>
<feature type="turn" evidence="5">
    <location>
        <begin position="89"/>
        <end position="91"/>
    </location>
</feature>
<feature type="strand" evidence="5">
    <location>
        <begin position="96"/>
        <end position="100"/>
    </location>
</feature>
<feature type="strand" evidence="5">
    <location>
        <begin position="106"/>
        <end position="110"/>
    </location>
</feature>
<feature type="helix" evidence="5">
    <location>
        <begin position="115"/>
        <end position="131"/>
    </location>
</feature>
<feature type="helix" evidence="5">
    <location>
        <begin position="135"/>
        <end position="152"/>
    </location>
</feature>
<feature type="strand" evidence="5">
    <location>
        <begin position="153"/>
        <end position="156"/>
    </location>
</feature>
<feature type="turn" evidence="5">
    <location>
        <begin position="157"/>
        <end position="159"/>
    </location>
</feature>
<feature type="strand" evidence="5">
    <location>
        <begin position="160"/>
        <end position="163"/>
    </location>
</feature>
<feature type="strand" evidence="5">
    <location>
        <begin position="165"/>
        <end position="172"/>
    </location>
</feature>
<feature type="strand" evidence="5">
    <location>
        <begin position="175"/>
        <end position="178"/>
    </location>
</feature>
<feature type="helix" evidence="5">
    <location>
        <begin position="185"/>
        <end position="191"/>
    </location>
</feature>
<feature type="helix" evidence="5">
    <location>
        <begin position="192"/>
        <end position="194"/>
    </location>
</feature>
<feature type="helix" evidence="5">
    <location>
        <begin position="198"/>
        <end position="211"/>
    </location>
</feature>
<feature type="strand" evidence="5">
    <location>
        <begin position="220"/>
        <end position="225"/>
    </location>
</feature>
<feature type="turn" evidence="5">
    <location>
        <begin position="226"/>
        <end position="228"/>
    </location>
</feature>
<feature type="strand" evidence="5">
    <location>
        <begin position="239"/>
        <end position="241"/>
    </location>
</feature>
<feature type="turn" evidence="5">
    <location>
        <begin position="242"/>
        <end position="244"/>
    </location>
</feature>
<feature type="helix" evidence="5">
    <location>
        <begin position="245"/>
        <end position="252"/>
    </location>
</feature>
<feature type="helix" evidence="5">
    <location>
        <begin position="259"/>
        <end position="267"/>
    </location>
</feature>
<feature type="helix" evidence="5">
    <location>
        <begin position="269"/>
        <end position="278"/>
    </location>
</feature>
<feature type="strand" evidence="5">
    <location>
        <begin position="283"/>
        <end position="286"/>
    </location>
</feature>
<feature type="turn" evidence="5">
    <location>
        <begin position="287"/>
        <end position="289"/>
    </location>
</feature>
<feature type="strand" evidence="5">
    <location>
        <begin position="292"/>
        <end position="294"/>
    </location>
</feature>
<feature type="helix" evidence="5">
    <location>
        <begin position="298"/>
        <end position="307"/>
    </location>
</feature>
<feature type="helix" evidence="5">
    <location>
        <begin position="311"/>
        <end position="323"/>
    </location>
</feature>
<feature type="helix" evidence="5">
    <location>
        <begin position="331"/>
        <end position="344"/>
    </location>
</feature>
<feature type="strand" evidence="5">
    <location>
        <begin position="347"/>
        <end position="350"/>
    </location>
</feature>
<feature type="strand" evidence="5">
    <location>
        <begin position="356"/>
        <end position="358"/>
    </location>
</feature>
<dbReference type="EC" id="3.2.1.4"/>
<dbReference type="EMBL" id="U00039">
    <property type="protein sequence ID" value="AAB18508.1"/>
    <property type="molecule type" value="Genomic_DNA"/>
</dbReference>
<dbReference type="EMBL" id="U00096">
    <property type="protein sequence ID" value="AAC76556.1"/>
    <property type="molecule type" value="Genomic_DNA"/>
</dbReference>
<dbReference type="EMBL" id="AP009048">
    <property type="protein sequence ID" value="BAE77763.1"/>
    <property type="molecule type" value="Genomic_DNA"/>
</dbReference>
<dbReference type="PIR" id="S47752">
    <property type="entry name" value="S47752"/>
</dbReference>
<dbReference type="RefSeq" id="NP_417988.1">
    <property type="nucleotide sequence ID" value="NC_000913.3"/>
</dbReference>
<dbReference type="RefSeq" id="WP_001311203.1">
    <property type="nucleotide sequence ID" value="NZ_LN832404.1"/>
</dbReference>
<dbReference type="PDB" id="3QXF">
    <property type="method" value="X-ray"/>
    <property type="resolution" value="1.85 A"/>
    <property type="chains" value="A/B/C/D=22-368"/>
</dbReference>
<dbReference type="PDB" id="3QXQ">
    <property type="method" value="X-ray"/>
    <property type="resolution" value="2.20 A"/>
    <property type="chains" value="A/B/C/D=22-368"/>
</dbReference>
<dbReference type="PDB" id="9B87">
    <property type="method" value="EM"/>
    <property type="resolution" value="2.65 A"/>
    <property type="chains" value="A/B/C/D=22-368"/>
</dbReference>
<dbReference type="PDBsum" id="3QXF"/>
<dbReference type="PDBsum" id="3QXQ"/>
<dbReference type="PDBsum" id="9B87"/>
<dbReference type="EMDB" id="EMD-44334"/>
<dbReference type="SMR" id="P37651"/>
<dbReference type="BioGRID" id="4263272">
    <property type="interactions" value="104"/>
</dbReference>
<dbReference type="FunCoup" id="P37651">
    <property type="interactions" value="20"/>
</dbReference>
<dbReference type="IntAct" id="P37651">
    <property type="interactions" value="4"/>
</dbReference>
<dbReference type="STRING" id="511145.b3531"/>
<dbReference type="CAZy" id="GH8">
    <property type="family name" value="Glycoside Hydrolase Family 8"/>
</dbReference>
<dbReference type="TCDB" id="4.D.3.1.6">
    <property type="family name" value="the glycan glucosyl transferase (opgh) family"/>
</dbReference>
<dbReference type="PaxDb" id="511145-b3531"/>
<dbReference type="EnsemblBacteria" id="AAC76556">
    <property type="protein sequence ID" value="AAC76556"/>
    <property type="gene ID" value="b3531"/>
</dbReference>
<dbReference type="GeneID" id="948046"/>
<dbReference type="KEGG" id="ecj:JW3499"/>
<dbReference type="KEGG" id="eco:b3531"/>
<dbReference type="KEGG" id="ecoc:C3026_19130"/>
<dbReference type="PATRIC" id="fig|511145.12.peg.3642"/>
<dbReference type="EchoBASE" id="EB2167"/>
<dbReference type="eggNOG" id="COG3405">
    <property type="taxonomic scope" value="Bacteria"/>
</dbReference>
<dbReference type="HOGENOM" id="CLU_037297_0_0_6"/>
<dbReference type="InParanoid" id="P37651"/>
<dbReference type="OMA" id="IRVYLWV"/>
<dbReference type="OrthoDB" id="9766708at2"/>
<dbReference type="PhylomeDB" id="P37651"/>
<dbReference type="BioCyc" id="EcoCyc:EG12258-MONOMER"/>
<dbReference type="BioCyc" id="MetaCyc:EG12258-MONOMER"/>
<dbReference type="BRENDA" id="3.2.1.4">
    <property type="organism ID" value="2026"/>
</dbReference>
<dbReference type="UniPathway" id="UPA00694"/>
<dbReference type="EvolutionaryTrace" id="P37651"/>
<dbReference type="PRO" id="PR:P37651"/>
<dbReference type="Proteomes" id="UP000000625">
    <property type="component" value="Chromosome"/>
</dbReference>
<dbReference type="GO" id="GO:0005576">
    <property type="term" value="C:extracellular region"/>
    <property type="evidence" value="ECO:0000314"/>
    <property type="project" value="EcoCyc"/>
</dbReference>
<dbReference type="GO" id="GO:0008810">
    <property type="term" value="F:cellulase activity"/>
    <property type="evidence" value="ECO:0000314"/>
    <property type="project" value="EcoCyc"/>
</dbReference>
<dbReference type="GO" id="GO:0030245">
    <property type="term" value="P:cellulose catabolic process"/>
    <property type="evidence" value="ECO:0007669"/>
    <property type="project" value="UniProtKB-KW"/>
</dbReference>
<dbReference type="Gene3D" id="1.50.10.10">
    <property type="match status" value="1"/>
</dbReference>
<dbReference type="InterPro" id="IPR008928">
    <property type="entry name" value="6-hairpin_glycosidase_sf"/>
</dbReference>
<dbReference type="InterPro" id="IPR012341">
    <property type="entry name" value="6hp_glycosidase-like_sf"/>
</dbReference>
<dbReference type="InterPro" id="IPR002037">
    <property type="entry name" value="Glyco_hydro_8"/>
</dbReference>
<dbReference type="InterPro" id="IPR019834">
    <property type="entry name" value="Glyco_hydro_8_CS"/>
</dbReference>
<dbReference type="NCBIfam" id="NF008305">
    <property type="entry name" value="PRK11097.1"/>
    <property type="match status" value="1"/>
</dbReference>
<dbReference type="Pfam" id="PF01270">
    <property type="entry name" value="Glyco_hydro_8"/>
    <property type="match status" value="1"/>
</dbReference>
<dbReference type="PRINTS" id="PR00735">
    <property type="entry name" value="GLHYDRLASE8"/>
</dbReference>
<dbReference type="SUPFAM" id="SSF48208">
    <property type="entry name" value="Six-hairpin glycosidases"/>
    <property type="match status" value="1"/>
</dbReference>
<dbReference type="PROSITE" id="PS00812">
    <property type="entry name" value="GLYCOSYL_HYDROL_F8"/>
    <property type="match status" value="1"/>
</dbReference>
<reference key="1">
    <citation type="journal article" date="1999" name="Mol. Gen. Genet.">
        <title>Cloning of the Escherichia coli endo-1,4-D-glucanase gene and identification of its product.</title>
        <authorList>
            <person name="Park Y.W."/>
            <person name="Yun H.D."/>
        </authorList>
    </citation>
    <scope>NUCLEOTIDE SEQUENCE [GENOMIC DNA]</scope>
    <scope>CHARACTERIZATION</scope>
    <source>
        <strain>K12 / W3110 / ATCC 27325 / DSM 5911</strain>
    </source>
</reference>
<reference key="2">
    <citation type="journal article" date="1994" name="Nucleic Acids Res.">
        <title>Analysis of the Escherichia coli genome. V. DNA sequence of the region from 76.0 to 81.5 minutes.</title>
        <authorList>
            <person name="Sofia H.J."/>
            <person name="Burland V."/>
            <person name="Daniels D.L."/>
            <person name="Plunkett G. III"/>
            <person name="Blattner F.R."/>
        </authorList>
    </citation>
    <scope>NUCLEOTIDE SEQUENCE [LARGE SCALE GENOMIC DNA]</scope>
    <source>
        <strain>K12 / MG1655 / ATCC 47076</strain>
    </source>
</reference>
<reference key="3">
    <citation type="journal article" date="1997" name="Science">
        <title>The complete genome sequence of Escherichia coli K-12.</title>
        <authorList>
            <person name="Blattner F.R."/>
            <person name="Plunkett G. III"/>
            <person name="Bloch C.A."/>
            <person name="Perna N.T."/>
            <person name="Burland V."/>
            <person name="Riley M."/>
            <person name="Collado-Vides J."/>
            <person name="Glasner J.D."/>
            <person name="Rode C.K."/>
            <person name="Mayhew G.F."/>
            <person name="Gregor J."/>
            <person name="Davis N.W."/>
            <person name="Kirkpatrick H.A."/>
            <person name="Goeden M.A."/>
            <person name="Rose D.J."/>
            <person name="Mau B."/>
            <person name="Shao Y."/>
        </authorList>
    </citation>
    <scope>NUCLEOTIDE SEQUENCE [LARGE SCALE GENOMIC DNA]</scope>
    <source>
        <strain>K12 / MG1655 / ATCC 47076</strain>
    </source>
</reference>
<reference key="4">
    <citation type="journal article" date="2006" name="Mol. Syst. Biol.">
        <title>Highly accurate genome sequences of Escherichia coli K-12 strains MG1655 and W3110.</title>
        <authorList>
            <person name="Hayashi K."/>
            <person name="Morooka N."/>
            <person name="Yamamoto Y."/>
            <person name="Fujita K."/>
            <person name="Isono K."/>
            <person name="Choi S."/>
            <person name="Ohtsubo E."/>
            <person name="Baba T."/>
            <person name="Wanner B.L."/>
            <person name="Mori H."/>
            <person name="Horiuchi T."/>
        </authorList>
    </citation>
    <scope>NUCLEOTIDE SEQUENCE [LARGE SCALE GENOMIC DNA]</scope>
    <source>
        <strain>K12 / W3110 / ATCC 27325 / DSM 5911</strain>
    </source>
</reference>
<reference key="5">
    <citation type="journal article" date="2001" name="Mol. Microbiol.">
        <title>The multicellular morphotypes of Salmonella typhimurium and Escherichia coli produce cellulose as the second component of the extracellular matrix.</title>
        <authorList>
            <person name="Zogaj X."/>
            <person name="Nimtz M."/>
            <person name="Rohde M."/>
            <person name="Bokranz W."/>
            <person name="Roemling U."/>
        </authorList>
    </citation>
    <scope>CHARACTERIZATION</scope>
    <source>
        <strain>ECOR 10</strain>
        <strain>ECOR 12</strain>
        <strain>TOB1</strain>
    </source>
</reference>
<sequence>MNVLRSGIVTMLLLAAFSVQAACTWPAWEQFKKDYISQEGRVIDPSDARKITTSEGQSYGMFSALAANDRAAFDNILDWTQNNLAQGSLKERLPAWLWGKKENSKWEVLDSNSASDGDVWMAWSLLEAGRLWKEQRYTDIGSALLKRIAREEVVTVPGLGSMLLPGKVGFAEDNSWRFNPSYLPPTLAQYFTRFGAPWTTLRETNQRLLLETAPKGFSPDWVRYEKDKGWQLKAEKTLISSYDAIRVYMWVGMMPDSDPQKARMLNRFKPMATFTEKNGYPPEKVDVATGKAQGKGPVGFSAAMLPFLQNRDAQAVQRQRVADNFPGSDAYYNYVLTLFGQGWDQHRFRFSTKGELLPDWGQECANSH</sequence>
<proteinExistence type="evidence at protein level"/>
<organism>
    <name type="scientific">Escherichia coli (strain K12)</name>
    <dbReference type="NCBI Taxonomy" id="83333"/>
    <lineage>
        <taxon>Bacteria</taxon>
        <taxon>Pseudomonadati</taxon>
        <taxon>Pseudomonadota</taxon>
        <taxon>Gammaproteobacteria</taxon>
        <taxon>Enterobacterales</taxon>
        <taxon>Enterobacteriaceae</taxon>
        <taxon>Escherichia</taxon>
    </lineage>
</organism>
<evidence type="ECO:0000250" key="1"/>
<evidence type="ECO:0000255" key="2"/>
<evidence type="ECO:0000255" key="3">
    <source>
        <dbReference type="PROSITE-ProRule" id="PRU10058"/>
    </source>
</evidence>
<evidence type="ECO:0000305" key="4"/>
<evidence type="ECO:0007829" key="5">
    <source>
        <dbReference type="PDB" id="3QXF"/>
    </source>
</evidence>